<comment type="function">
    <text evidence="1">Part of the ABC transporter complex CcmAB involved in the biogenesis of c-type cytochromes; once thought to export heme, this seems not to be the case, but its exact role is uncertain. Responsible for energy coupling to the transport system.</text>
</comment>
<comment type="catalytic activity">
    <reaction evidence="1">
        <text>heme b(in) + ATP + H2O = heme b(out) + ADP + phosphate + H(+)</text>
        <dbReference type="Rhea" id="RHEA:19261"/>
        <dbReference type="ChEBI" id="CHEBI:15377"/>
        <dbReference type="ChEBI" id="CHEBI:15378"/>
        <dbReference type="ChEBI" id="CHEBI:30616"/>
        <dbReference type="ChEBI" id="CHEBI:43474"/>
        <dbReference type="ChEBI" id="CHEBI:60344"/>
        <dbReference type="ChEBI" id="CHEBI:456216"/>
        <dbReference type="EC" id="7.6.2.5"/>
    </reaction>
</comment>
<comment type="subunit">
    <text evidence="1">The complex is composed of two ATP-binding proteins (CcmA) and two transmembrane proteins (CcmB).</text>
</comment>
<comment type="subcellular location">
    <subcellularLocation>
        <location evidence="1">Cell inner membrane</location>
        <topology evidence="1">Peripheral membrane protein</topology>
    </subcellularLocation>
</comment>
<comment type="similarity">
    <text evidence="1">Belongs to the ABC transporter superfamily. CcmA exporter (TC 3.A.1.107) family.</text>
</comment>
<dbReference type="EC" id="7.6.2.5" evidence="1"/>
<dbReference type="EMBL" id="X63462">
    <property type="protein sequence ID" value="CAA45061.1"/>
    <property type="molecule type" value="Genomic_DNA"/>
</dbReference>
<dbReference type="EMBL" id="CP001312">
    <property type="protein sequence ID" value="ADE85530.1"/>
    <property type="molecule type" value="Genomic_DNA"/>
</dbReference>
<dbReference type="PIR" id="S23663">
    <property type="entry name" value="S23663"/>
</dbReference>
<dbReference type="RefSeq" id="WP_013067509.1">
    <property type="nucleotide sequence ID" value="NC_014034.1"/>
</dbReference>
<dbReference type="SMR" id="P29959"/>
<dbReference type="STRING" id="272942.RCAP_rcc01785"/>
<dbReference type="GeneID" id="31490660"/>
<dbReference type="KEGG" id="rcp:RCAP_rcc01785"/>
<dbReference type="eggNOG" id="COG4133">
    <property type="taxonomic scope" value="Bacteria"/>
</dbReference>
<dbReference type="HOGENOM" id="CLU_000604_1_2_5"/>
<dbReference type="OrthoDB" id="9800654at2"/>
<dbReference type="Proteomes" id="UP000002361">
    <property type="component" value="Chromosome"/>
</dbReference>
<dbReference type="GO" id="GO:0005886">
    <property type="term" value="C:plasma membrane"/>
    <property type="evidence" value="ECO:0007669"/>
    <property type="project" value="UniProtKB-SubCell"/>
</dbReference>
<dbReference type="GO" id="GO:0015439">
    <property type="term" value="F:ABC-type heme transporter activity"/>
    <property type="evidence" value="ECO:0007669"/>
    <property type="project" value="UniProtKB-EC"/>
</dbReference>
<dbReference type="GO" id="GO:0005524">
    <property type="term" value="F:ATP binding"/>
    <property type="evidence" value="ECO:0007669"/>
    <property type="project" value="UniProtKB-KW"/>
</dbReference>
<dbReference type="GO" id="GO:0016887">
    <property type="term" value="F:ATP hydrolysis activity"/>
    <property type="evidence" value="ECO:0007669"/>
    <property type="project" value="InterPro"/>
</dbReference>
<dbReference type="GO" id="GO:0017004">
    <property type="term" value="P:cytochrome complex assembly"/>
    <property type="evidence" value="ECO:0007669"/>
    <property type="project" value="UniProtKB-KW"/>
</dbReference>
<dbReference type="Gene3D" id="3.40.50.300">
    <property type="entry name" value="P-loop containing nucleotide triphosphate hydrolases"/>
    <property type="match status" value="1"/>
</dbReference>
<dbReference type="InterPro" id="IPR003593">
    <property type="entry name" value="AAA+_ATPase"/>
</dbReference>
<dbReference type="InterPro" id="IPR003439">
    <property type="entry name" value="ABC_transporter-like_ATP-bd"/>
</dbReference>
<dbReference type="InterPro" id="IPR017871">
    <property type="entry name" value="ABC_transporter-like_CS"/>
</dbReference>
<dbReference type="InterPro" id="IPR005895">
    <property type="entry name" value="ABC_transptr_haem_export_CcmA"/>
</dbReference>
<dbReference type="InterPro" id="IPR027417">
    <property type="entry name" value="P-loop_NTPase"/>
</dbReference>
<dbReference type="NCBIfam" id="TIGR01189">
    <property type="entry name" value="ccmA"/>
    <property type="match status" value="1"/>
</dbReference>
<dbReference type="PANTHER" id="PTHR43499">
    <property type="entry name" value="ABC TRANSPORTER I FAMILY MEMBER 1"/>
    <property type="match status" value="1"/>
</dbReference>
<dbReference type="PANTHER" id="PTHR43499:SF1">
    <property type="entry name" value="ABC TRANSPORTER I FAMILY MEMBER 1"/>
    <property type="match status" value="1"/>
</dbReference>
<dbReference type="Pfam" id="PF00005">
    <property type="entry name" value="ABC_tran"/>
    <property type="match status" value="1"/>
</dbReference>
<dbReference type="SMART" id="SM00382">
    <property type="entry name" value="AAA"/>
    <property type="match status" value="1"/>
</dbReference>
<dbReference type="SUPFAM" id="SSF52540">
    <property type="entry name" value="P-loop containing nucleoside triphosphate hydrolases"/>
    <property type="match status" value="1"/>
</dbReference>
<dbReference type="PROSITE" id="PS00211">
    <property type="entry name" value="ABC_TRANSPORTER_1"/>
    <property type="match status" value="1"/>
</dbReference>
<dbReference type="PROSITE" id="PS50893">
    <property type="entry name" value="ABC_TRANSPORTER_2"/>
    <property type="match status" value="1"/>
</dbReference>
<dbReference type="PROSITE" id="PS51243">
    <property type="entry name" value="CCMA"/>
    <property type="match status" value="1"/>
</dbReference>
<accession>P29959</accession>
<accession>D5AU91</accession>
<proteinExistence type="inferred from homology"/>
<feature type="chain" id="PRO_0000092203" description="Cytochrome c biogenesis ATP-binding export protein CcmA">
    <location>
        <begin position="1"/>
        <end position="214"/>
    </location>
</feature>
<feature type="domain" description="ABC transporter" evidence="1">
    <location>
        <begin position="4"/>
        <end position="214"/>
    </location>
</feature>
<feature type="binding site" evidence="1">
    <location>
        <begin position="36"/>
        <end position="43"/>
    </location>
    <ligand>
        <name>ATP</name>
        <dbReference type="ChEBI" id="CHEBI:30616"/>
    </ligand>
</feature>
<organism>
    <name type="scientific">Rhodobacter capsulatus (strain ATCC BAA-309 / NBRC 16581 / SB1003)</name>
    <dbReference type="NCBI Taxonomy" id="272942"/>
    <lineage>
        <taxon>Bacteria</taxon>
        <taxon>Pseudomonadati</taxon>
        <taxon>Pseudomonadota</taxon>
        <taxon>Alphaproteobacteria</taxon>
        <taxon>Rhodobacterales</taxon>
        <taxon>Rhodobacter group</taxon>
        <taxon>Rhodobacter</taxon>
    </lineage>
</organism>
<protein>
    <recommendedName>
        <fullName evidence="1">Cytochrome c biogenesis ATP-binding export protein CcmA</fullName>
        <ecNumber evidence="1">7.6.2.5</ecNumber>
    </recommendedName>
    <alternativeName>
        <fullName>Cytochrome c-type biogenesis ATP-binding protein HelA</fullName>
    </alternativeName>
    <alternativeName>
        <fullName evidence="1">Heme exporter protein A</fullName>
    </alternativeName>
</protein>
<evidence type="ECO:0000255" key="1">
    <source>
        <dbReference type="HAMAP-Rule" id="MF_01707"/>
    </source>
</evidence>
<keyword id="KW-0067">ATP-binding</keyword>
<keyword id="KW-0997">Cell inner membrane</keyword>
<keyword id="KW-1003">Cell membrane</keyword>
<keyword id="KW-0201">Cytochrome c-type biogenesis</keyword>
<keyword id="KW-0472">Membrane</keyword>
<keyword id="KW-0547">Nucleotide-binding</keyword>
<keyword id="KW-1185">Reference proteome</keyword>
<keyword id="KW-1278">Translocase</keyword>
<keyword id="KW-0813">Transport</keyword>
<sequence length="214" mass="22169">MTLLAVDQLTVSRGGLAVLEGVSFSLAAGHALVLRGPNGIGKTTLLRTLAGLQPPLAGRVSMPPEGIAYAAHADGLKATLSVRENLQFWAAIHATDTVETALARMNLNALEHRAAASLSAGQKRRLGLARLLVTGRPVWVLDEPTVSLDAASVALFAEAVRAHLAAGGAALMATHIDLGLSEARVLDLAPFKARPPEAGGHRGAFDHGFDGAFL</sequence>
<name>CCMA_RHOCB</name>
<gene>
    <name evidence="1" type="primary">ccmA</name>
    <name type="synonym">helA</name>
    <name type="ordered locus">RCAP_rcc01785</name>
</gene>
<reference key="1">
    <citation type="journal article" date="1992" name="Genes Dev.">
        <title>Bacterial cytochromes c biogenesis.</title>
        <authorList>
            <person name="Beckman D.L."/>
            <person name="Trawick D.R."/>
            <person name="Kranz R.G."/>
        </authorList>
    </citation>
    <scope>NUCLEOTIDE SEQUENCE [GENOMIC DNA]</scope>
    <source>
        <strain>ATCC BAA-309 / NBRC 16581 / SB1003</strain>
    </source>
</reference>
<reference key="2">
    <citation type="journal article" date="2010" name="J. Bacteriol.">
        <title>Complete genome sequence of the photosynthetic purple nonsulfur bacterium Rhodobacter capsulatus SB 1003.</title>
        <authorList>
            <person name="Strnad H."/>
            <person name="Lapidus A."/>
            <person name="Paces J."/>
            <person name="Ulbrich P."/>
            <person name="Vlcek C."/>
            <person name="Paces V."/>
            <person name="Haselkorn R."/>
        </authorList>
    </citation>
    <scope>NUCLEOTIDE SEQUENCE [LARGE SCALE GENOMIC DNA]</scope>
    <source>
        <strain>ATCC BAA-309 / NBRC 16581 / SB1003</strain>
    </source>
</reference>